<accession>Q9YAA0</accession>
<proteinExistence type="inferred from homology"/>
<evidence type="ECO:0000250" key="1"/>
<evidence type="ECO:0000255" key="2"/>
<evidence type="ECO:0000305" key="3"/>
<name>COBD_AERPE</name>
<gene>
    <name type="primary">cobD</name>
    <name type="ordered locus">APE_2039.1</name>
</gene>
<keyword id="KW-1003">Cell membrane</keyword>
<keyword id="KW-0169">Cobalamin biosynthesis</keyword>
<keyword id="KW-0472">Membrane</keyword>
<keyword id="KW-1185">Reference proteome</keyword>
<keyword id="KW-0812">Transmembrane</keyword>
<keyword id="KW-1133">Transmembrane helix</keyword>
<comment type="function">
    <text evidence="1">Converts cobyric acid to cobinamide by the addition of aminopropanol on the F carboxylic group.</text>
</comment>
<comment type="pathway">
    <text>Cofactor biosynthesis; adenosylcobalamin biosynthesis.</text>
</comment>
<comment type="subcellular location">
    <subcellularLocation>
        <location evidence="3">Cell membrane</location>
        <topology evidence="3">Multi-pass membrane protein</topology>
    </subcellularLocation>
</comment>
<comment type="similarity">
    <text evidence="3">Belongs to the CobD/CbiB family.</text>
</comment>
<reference key="1">
    <citation type="journal article" date="1999" name="DNA Res.">
        <title>Complete genome sequence of an aerobic hyper-thermophilic crenarchaeon, Aeropyrum pernix K1.</title>
        <authorList>
            <person name="Kawarabayasi Y."/>
            <person name="Hino Y."/>
            <person name="Horikawa H."/>
            <person name="Yamazaki S."/>
            <person name="Haikawa Y."/>
            <person name="Jin-no K."/>
            <person name="Takahashi M."/>
            <person name="Sekine M."/>
            <person name="Baba S."/>
            <person name="Ankai A."/>
            <person name="Kosugi H."/>
            <person name="Hosoyama A."/>
            <person name="Fukui S."/>
            <person name="Nagai Y."/>
            <person name="Nishijima K."/>
            <person name="Nakazawa H."/>
            <person name="Takamiya M."/>
            <person name="Masuda S."/>
            <person name="Funahashi T."/>
            <person name="Tanaka T."/>
            <person name="Kudoh Y."/>
            <person name="Yamazaki J."/>
            <person name="Kushida N."/>
            <person name="Oguchi A."/>
            <person name="Aoki K."/>
            <person name="Kubota K."/>
            <person name="Nakamura Y."/>
            <person name="Nomura N."/>
            <person name="Sako Y."/>
            <person name="Kikuchi H."/>
        </authorList>
    </citation>
    <scope>NUCLEOTIDE SEQUENCE [LARGE SCALE GENOMIC DNA]</scope>
    <source>
        <strain>ATCC 700893 / DSM 11879 / JCM 9820 / NBRC 100138 / K1</strain>
    </source>
</reference>
<organism>
    <name type="scientific">Aeropyrum pernix (strain ATCC 700893 / DSM 11879 / JCM 9820 / NBRC 100138 / K1)</name>
    <dbReference type="NCBI Taxonomy" id="272557"/>
    <lineage>
        <taxon>Archaea</taxon>
        <taxon>Thermoproteota</taxon>
        <taxon>Thermoprotei</taxon>
        <taxon>Desulfurococcales</taxon>
        <taxon>Desulfurococcaceae</taxon>
        <taxon>Aeropyrum</taxon>
    </lineage>
</organism>
<protein>
    <recommendedName>
        <fullName>Probable cobalamin biosynthesis protein CobD</fullName>
    </recommendedName>
</protein>
<sequence length="320" mass="33894">MFEWLARALYPEPEVLAAGLAVGLMLDLAYPEHRGLALKLHPVHTSYIMALRLVRPGAGRAWGAAIWLLTISSHMMVYASLLAASYLVHPALHTLAVGVIVKLSMPLRLLLDTCIKASRMAAAGRVECSRRLVQGIVRRDLSGEPLGRVLSACIESTAESLVDGYTSPLTYYILLGPLGALLQRLSNTLDGAVGFKTPLLYRQGWFSAKADTLLNFIPARLTAVMVALAAPLAGASTLGSLRCIARCARLLESVNAGYPISAFAGALDVRLEKKGFYIVNGGAPYPGWRDGLKASRLAVSAASLYTVLAALAIALGGGAG</sequence>
<feature type="chain" id="PRO_0000150939" description="Probable cobalamin biosynthesis protein CobD">
    <location>
        <begin position="1"/>
        <end position="320"/>
    </location>
</feature>
<feature type="transmembrane region" description="Helical" evidence="2">
    <location>
        <begin position="8"/>
        <end position="28"/>
    </location>
</feature>
<feature type="transmembrane region" description="Helical" evidence="2">
    <location>
        <begin position="57"/>
        <end position="77"/>
    </location>
</feature>
<feature type="transmembrane region" description="Helical" evidence="2">
    <location>
        <begin position="81"/>
        <end position="101"/>
    </location>
</feature>
<feature type="transmembrane region" description="Helical" evidence="2">
    <location>
        <begin position="161"/>
        <end position="181"/>
    </location>
</feature>
<feature type="transmembrane region" description="Helical" evidence="2">
    <location>
        <begin position="221"/>
        <end position="241"/>
    </location>
</feature>
<feature type="transmembrane region" description="Helical" evidence="2">
    <location>
        <begin position="297"/>
        <end position="317"/>
    </location>
</feature>
<dbReference type="EMBL" id="BA000002">
    <property type="protein sequence ID" value="BAA81049.2"/>
    <property type="molecule type" value="Genomic_DNA"/>
</dbReference>
<dbReference type="PIR" id="A72508">
    <property type="entry name" value="A72508"/>
</dbReference>
<dbReference type="RefSeq" id="WP_010866752.1">
    <property type="nucleotide sequence ID" value="NC_000854.2"/>
</dbReference>
<dbReference type="STRING" id="272557.APE_2039.1"/>
<dbReference type="EnsemblBacteria" id="BAA81049">
    <property type="protein sequence ID" value="BAA81049"/>
    <property type="gene ID" value="APE_2039.1"/>
</dbReference>
<dbReference type="GeneID" id="1445147"/>
<dbReference type="KEGG" id="ape:APE_2039.1"/>
<dbReference type="PATRIC" id="fig|272557.25.peg.1356"/>
<dbReference type="eggNOG" id="arCOG04274">
    <property type="taxonomic scope" value="Archaea"/>
</dbReference>
<dbReference type="UniPathway" id="UPA00148"/>
<dbReference type="Proteomes" id="UP000002518">
    <property type="component" value="Chromosome"/>
</dbReference>
<dbReference type="GO" id="GO:0005886">
    <property type="term" value="C:plasma membrane"/>
    <property type="evidence" value="ECO:0007669"/>
    <property type="project" value="UniProtKB-SubCell"/>
</dbReference>
<dbReference type="GO" id="GO:0015420">
    <property type="term" value="F:ABC-type vitamin B12 transporter activity"/>
    <property type="evidence" value="ECO:0007669"/>
    <property type="project" value="UniProtKB-UniRule"/>
</dbReference>
<dbReference type="GO" id="GO:0048472">
    <property type="term" value="F:threonine-phosphate decarboxylase activity"/>
    <property type="evidence" value="ECO:0007669"/>
    <property type="project" value="InterPro"/>
</dbReference>
<dbReference type="GO" id="GO:0009236">
    <property type="term" value="P:cobalamin biosynthetic process"/>
    <property type="evidence" value="ECO:0007669"/>
    <property type="project" value="UniProtKB-UniRule"/>
</dbReference>
<dbReference type="HAMAP" id="MF_00024">
    <property type="entry name" value="CobD_CbiB"/>
    <property type="match status" value="1"/>
</dbReference>
<dbReference type="InterPro" id="IPR004485">
    <property type="entry name" value="Cobalamin_biosynth_CobD/CbiB"/>
</dbReference>
<dbReference type="NCBIfam" id="NF002281">
    <property type="entry name" value="PRK01209.2-5"/>
    <property type="match status" value="1"/>
</dbReference>
<dbReference type="PANTHER" id="PTHR34308">
    <property type="entry name" value="COBALAMIN BIOSYNTHESIS PROTEIN CBIB"/>
    <property type="match status" value="1"/>
</dbReference>
<dbReference type="PANTHER" id="PTHR34308:SF1">
    <property type="entry name" value="COBALAMIN BIOSYNTHESIS PROTEIN CBIB"/>
    <property type="match status" value="1"/>
</dbReference>
<dbReference type="Pfam" id="PF03186">
    <property type="entry name" value="CobD_Cbib"/>
    <property type="match status" value="1"/>
</dbReference>